<evidence type="ECO:0000255" key="1">
    <source>
        <dbReference type="HAMAP-Rule" id="MF_01307"/>
    </source>
</evidence>
<evidence type="ECO:0000305" key="2"/>
<dbReference type="EMBL" id="CP000544">
    <property type="protein sequence ID" value="ABM61617.1"/>
    <property type="molecule type" value="Genomic_DNA"/>
</dbReference>
<dbReference type="RefSeq" id="WP_011813640.1">
    <property type="nucleotide sequence ID" value="NC_008789.1"/>
</dbReference>
<dbReference type="SMR" id="A1WVA5"/>
<dbReference type="STRING" id="349124.Hhal_0841"/>
<dbReference type="KEGG" id="hha:Hhal_0841"/>
<dbReference type="eggNOG" id="COG0098">
    <property type="taxonomic scope" value="Bacteria"/>
</dbReference>
<dbReference type="HOGENOM" id="CLU_065898_2_2_6"/>
<dbReference type="OrthoDB" id="9809045at2"/>
<dbReference type="Proteomes" id="UP000000647">
    <property type="component" value="Chromosome"/>
</dbReference>
<dbReference type="GO" id="GO:0015935">
    <property type="term" value="C:small ribosomal subunit"/>
    <property type="evidence" value="ECO:0007669"/>
    <property type="project" value="InterPro"/>
</dbReference>
<dbReference type="GO" id="GO:0019843">
    <property type="term" value="F:rRNA binding"/>
    <property type="evidence" value="ECO:0007669"/>
    <property type="project" value="UniProtKB-UniRule"/>
</dbReference>
<dbReference type="GO" id="GO:0003735">
    <property type="term" value="F:structural constituent of ribosome"/>
    <property type="evidence" value="ECO:0007669"/>
    <property type="project" value="InterPro"/>
</dbReference>
<dbReference type="GO" id="GO:0006412">
    <property type="term" value="P:translation"/>
    <property type="evidence" value="ECO:0007669"/>
    <property type="project" value="UniProtKB-UniRule"/>
</dbReference>
<dbReference type="FunFam" id="3.30.160.20:FF:000001">
    <property type="entry name" value="30S ribosomal protein S5"/>
    <property type="match status" value="1"/>
</dbReference>
<dbReference type="FunFam" id="3.30.230.10:FF:000002">
    <property type="entry name" value="30S ribosomal protein S5"/>
    <property type="match status" value="1"/>
</dbReference>
<dbReference type="Gene3D" id="3.30.160.20">
    <property type="match status" value="1"/>
</dbReference>
<dbReference type="Gene3D" id="3.30.230.10">
    <property type="match status" value="1"/>
</dbReference>
<dbReference type="HAMAP" id="MF_01307_B">
    <property type="entry name" value="Ribosomal_uS5_B"/>
    <property type="match status" value="1"/>
</dbReference>
<dbReference type="InterPro" id="IPR020568">
    <property type="entry name" value="Ribosomal_Su5_D2-typ_SF"/>
</dbReference>
<dbReference type="InterPro" id="IPR000851">
    <property type="entry name" value="Ribosomal_uS5"/>
</dbReference>
<dbReference type="InterPro" id="IPR005712">
    <property type="entry name" value="Ribosomal_uS5_bac-type"/>
</dbReference>
<dbReference type="InterPro" id="IPR005324">
    <property type="entry name" value="Ribosomal_uS5_C"/>
</dbReference>
<dbReference type="InterPro" id="IPR013810">
    <property type="entry name" value="Ribosomal_uS5_N"/>
</dbReference>
<dbReference type="InterPro" id="IPR018192">
    <property type="entry name" value="Ribosomal_uS5_N_CS"/>
</dbReference>
<dbReference type="InterPro" id="IPR014721">
    <property type="entry name" value="Ribsml_uS5_D2-typ_fold_subgr"/>
</dbReference>
<dbReference type="NCBIfam" id="TIGR01021">
    <property type="entry name" value="rpsE_bact"/>
    <property type="match status" value="1"/>
</dbReference>
<dbReference type="PANTHER" id="PTHR48277">
    <property type="entry name" value="MITOCHONDRIAL RIBOSOMAL PROTEIN S5"/>
    <property type="match status" value="1"/>
</dbReference>
<dbReference type="PANTHER" id="PTHR48277:SF1">
    <property type="entry name" value="MITOCHONDRIAL RIBOSOMAL PROTEIN S5"/>
    <property type="match status" value="1"/>
</dbReference>
<dbReference type="Pfam" id="PF00333">
    <property type="entry name" value="Ribosomal_S5"/>
    <property type="match status" value="1"/>
</dbReference>
<dbReference type="Pfam" id="PF03719">
    <property type="entry name" value="Ribosomal_S5_C"/>
    <property type="match status" value="1"/>
</dbReference>
<dbReference type="SUPFAM" id="SSF54768">
    <property type="entry name" value="dsRNA-binding domain-like"/>
    <property type="match status" value="1"/>
</dbReference>
<dbReference type="SUPFAM" id="SSF54211">
    <property type="entry name" value="Ribosomal protein S5 domain 2-like"/>
    <property type="match status" value="1"/>
</dbReference>
<dbReference type="PROSITE" id="PS00585">
    <property type="entry name" value="RIBOSOMAL_S5"/>
    <property type="match status" value="1"/>
</dbReference>
<dbReference type="PROSITE" id="PS50881">
    <property type="entry name" value="S5_DSRBD"/>
    <property type="match status" value="1"/>
</dbReference>
<proteinExistence type="inferred from homology"/>
<name>RS5_HALHL</name>
<protein>
    <recommendedName>
        <fullName evidence="1">Small ribosomal subunit protein uS5</fullName>
    </recommendedName>
    <alternativeName>
        <fullName evidence="2">30S ribosomal protein S5</fullName>
    </alternativeName>
</protein>
<keyword id="KW-1185">Reference proteome</keyword>
<keyword id="KW-0687">Ribonucleoprotein</keyword>
<keyword id="KW-0689">Ribosomal protein</keyword>
<keyword id="KW-0694">RNA-binding</keyword>
<keyword id="KW-0699">rRNA-binding</keyword>
<reference key="1">
    <citation type="submission" date="2006-12" db="EMBL/GenBank/DDBJ databases">
        <title>Complete sequence of Halorhodospira halophila SL1.</title>
        <authorList>
            <consortium name="US DOE Joint Genome Institute"/>
            <person name="Copeland A."/>
            <person name="Lucas S."/>
            <person name="Lapidus A."/>
            <person name="Barry K."/>
            <person name="Detter J.C."/>
            <person name="Glavina del Rio T."/>
            <person name="Hammon N."/>
            <person name="Israni S."/>
            <person name="Dalin E."/>
            <person name="Tice H."/>
            <person name="Pitluck S."/>
            <person name="Saunders E."/>
            <person name="Brettin T."/>
            <person name="Bruce D."/>
            <person name="Han C."/>
            <person name="Tapia R."/>
            <person name="Schmutz J."/>
            <person name="Larimer F."/>
            <person name="Land M."/>
            <person name="Hauser L."/>
            <person name="Kyrpides N."/>
            <person name="Mikhailova N."/>
            <person name="Hoff W."/>
            <person name="Richardson P."/>
        </authorList>
    </citation>
    <scope>NUCLEOTIDE SEQUENCE [LARGE SCALE GENOMIC DNA]</scope>
    <source>
        <strain>DSM 244 / SL1</strain>
    </source>
</reference>
<accession>A1WVA5</accession>
<comment type="function">
    <text evidence="1">With S4 and S12 plays an important role in translational accuracy.</text>
</comment>
<comment type="function">
    <text evidence="1">Located at the back of the 30S subunit body where it stabilizes the conformation of the head with respect to the body.</text>
</comment>
<comment type="subunit">
    <text evidence="1">Part of the 30S ribosomal subunit. Contacts proteins S4 and S8.</text>
</comment>
<comment type="domain">
    <text>The N-terminal domain interacts with the head of the 30S subunit; the C-terminal domain interacts with the body and contacts protein S4. The interaction surface between S4 and S5 is involved in control of translational fidelity.</text>
</comment>
<comment type="similarity">
    <text evidence="1">Belongs to the universal ribosomal protein uS5 family.</text>
</comment>
<gene>
    <name evidence="1" type="primary">rpsE</name>
    <name type="ordered locus">Hhal_0841</name>
</gene>
<feature type="chain" id="PRO_0000323133" description="Small ribosomal subunit protein uS5">
    <location>
        <begin position="1"/>
        <end position="167"/>
    </location>
</feature>
<feature type="domain" description="S5 DRBM" evidence="1">
    <location>
        <begin position="12"/>
        <end position="75"/>
    </location>
</feature>
<sequence length="167" mass="17392">MANGEQTGADGLREKLITINRVAKVVQGGRQFGFTALTVVGDGEGRVGFGYGKAREVPAAIQKAMERARGGMRTVPLDGPTLRYPVTHFHGSSKVFMKPASPGTGIIAGGAMRAVFEVLGVQDVLAKSVGSRNPINVVRATVDGLASMDSPEAVAARRGKSVEEITG</sequence>
<organism>
    <name type="scientific">Halorhodospira halophila (strain DSM 244 / SL1)</name>
    <name type="common">Ectothiorhodospira halophila (strain DSM 244 / SL1)</name>
    <dbReference type="NCBI Taxonomy" id="349124"/>
    <lineage>
        <taxon>Bacteria</taxon>
        <taxon>Pseudomonadati</taxon>
        <taxon>Pseudomonadota</taxon>
        <taxon>Gammaproteobacteria</taxon>
        <taxon>Chromatiales</taxon>
        <taxon>Ectothiorhodospiraceae</taxon>
        <taxon>Halorhodospira</taxon>
    </lineage>
</organism>